<gene>
    <name evidence="1" type="primary">clpP</name>
    <name type="ordered locus">DVU_1335</name>
</gene>
<organism>
    <name type="scientific">Nitratidesulfovibrio vulgaris (strain ATCC 29579 / DSM 644 / CCUG 34227 / NCIMB 8303 / VKM B-1760 / Hildenborough)</name>
    <name type="common">Desulfovibrio vulgaris</name>
    <dbReference type="NCBI Taxonomy" id="882"/>
    <lineage>
        <taxon>Bacteria</taxon>
        <taxon>Pseudomonadati</taxon>
        <taxon>Thermodesulfobacteriota</taxon>
        <taxon>Desulfovibrionia</taxon>
        <taxon>Desulfovibrionales</taxon>
        <taxon>Desulfovibrionaceae</taxon>
        <taxon>Nitratidesulfovibrio</taxon>
    </lineage>
</organism>
<reference key="1">
    <citation type="journal article" date="2004" name="Nat. Biotechnol.">
        <title>The genome sequence of the anaerobic, sulfate-reducing bacterium Desulfovibrio vulgaris Hildenborough.</title>
        <authorList>
            <person name="Heidelberg J.F."/>
            <person name="Seshadri R."/>
            <person name="Haveman S.A."/>
            <person name="Hemme C.L."/>
            <person name="Paulsen I.T."/>
            <person name="Kolonay J.F."/>
            <person name="Eisen J.A."/>
            <person name="Ward N.L."/>
            <person name="Methe B.A."/>
            <person name="Brinkac L.M."/>
            <person name="Daugherty S.C."/>
            <person name="DeBoy R.T."/>
            <person name="Dodson R.J."/>
            <person name="Durkin A.S."/>
            <person name="Madupu R."/>
            <person name="Nelson W.C."/>
            <person name="Sullivan S.A."/>
            <person name="Fouts D.E."/>
            <person name="Haft D.H."/>
            <person name="Selengut J."/>
            <person name="Peterson J.D."/>
            <person name="Davidsen T.M."/>
            <person name="Zafar N."/>
            <person name="Zhou L."/>
            <person name="Radune D."/>
            <person name="Dimitrov G."/>
            <person name="Hance M."/>
            <person name="Tran K."/>
            <person name="Khouri H.M."/>
            <person name="Gill J."/>
            <person name="Utterback T.R."/>
            <person name="Feldblyum T.V."/>
            <person name="Wall J.D."/>
            <person name="Voordouw G."/>
            <person name="Fraser C.M."/>
        </authorList>
    </citation>
    <scope>NUCLEOTIDE SEQUENCE [LARGE SCALE GENOMIC DNA]</scope>
    <source>
        <strain>ATCC 29579 / DSM 644 / CCUG 34227 / NCIMB 8303 / VKM B-1760 / Hildenborough</strain>
    </source>
</reference>
<sequence length="201" mass="21912">MPVPIVIESTGRAERAYDIYSRLLKDRIVLLGTPIDDQVASLICAQLLFLESENPEKEIHMYINSPGGSVTAGMAIYDTMQYINSPVSTLCMGQAASMGALLLAAGAPGLRFSLPHSRIMIHQPSGGFQGQATDIDIQAREVLRLKQSLNAIMSQHTGKPLEQVALDTERDYFMGPEEAQAYGLIDRVLTSRSEATDTISK</sequence>
<feature type="chain" id="PRO_0000179550" description="ATP-dependent Clp protease proteolytic subunit">
    <location>
        <begin position="1"/>
        <end position="201"/>
    </location>
</feature>
<feature type="active site" description="Nucleophile" evidence="1">
    <location>
        <position position="97"/>
    </location>
</feature>
<feature type="active site" evidence="1">
    <location>
        <position position="122"/>
    </location>
</feature>
<protein>
    <recommendedName>
        <fullName evidence="1">ATP-dependent Clp protease proteolytic subunit</fullName>
        <ecNumber evidence="1">3.4.21.92</ecNumber>
    </recommendedName>
    <alternativeName>
        <fullName evidence="1">Endopeptidase Clp</fullName>
    </alternativeName>
</protein>
<keyword id="KW-0963">Cytoplasm</keyword>
<keyword id="KW-0378">Hydrolase</keyword>
<keyword id="KW-0645">Protease</keyword>
<keyword id="KW-1185">Reference proteome</keyword>
<keyword id="KW-0720">Serine protease</keyword>
<proteinExistence type="inferred from homology"/>
<accession>Q72CE8</accession>
<evidence type="ECO:0000255" key="1">
    <source>
        <dbReference type="HAMAP-Rule" id="MF_00444"/>
    </source>
</evidence>
<comment type="function">
    <text evidence="1">Cleaves peptides in various proteins in a process that requires ATP hydrolysis. Has a chymotrypsin-like activity. Plays a major role in the degradation of misfolded proteins.</text>
</comment>
<comment type="catalytic activity">
    <reaction evidence="1">
        <text>Hydrolysis of proteins to small peptides in the presence of ATP and magnesium. alpha-casein is the usual test substrate. In the absence of ATP, only oligopeptides shorter than five residues are hydrolyzed (such as succinyl-Leu-Tyr-|-NHMec, and Leu-Tyr-Leu-|-Tyr-Trp, in which cleavage of the -Tyr-|-Leu- and -Tyr-|-Trp bonds also occurs).</text>
        <dbReference type="EC" id="3.4.21.92"/>
    </reaction>
</comment>
<comment type="subunit">
    <text evidence="1">Fourteen ClpP subunits assemble into 2 heptameric rings which stack back to back to give a disk-like structure with a central cavity, resembling the structure of eukaryotic proteasomes.</text>
</comment>
<comment type="subcellular location">
    <subcellularLocation>
        <location evidence="1">Cytoplasm</location>
    </subcellularLocation>
</comment>
<comment type="similarity">
    <text evidence="1">Belongs to the peptidase S14 family.</text>
</comment>
<name>CLPP_NITV2</name>
<dbReference type="EC" id="3.4.21.92" evidence="1"/>
<dbReference type="EMBL" id="AE017285">
    <property type="protein sequence ID" value="AAS95813.1"/>
    <property type="molecule type" value="Genomic_DNA"/>
</dbReference>
<dbReference type="RefSeq" id="WP_010938630.1">
    <property type="nucleotide sequence ID" value="NC_002937.3"/>
</dbReference>
<dbReference type="RefSeq" id="YP_010554.1">
    <property type="nucleotide sequence ID" value="NC_002937.3"/>
</dbReference>
<dbReference type="SMR" id="Q72CE8"/>
<dbReference type="STRING" id="882.DVU_1335"/>
<dbReference type="MEROPS" id="S14.001"/>
<dbReference type="PaxDb" id="882-DVU_1335"/>
<dbReference type="EnsemblBacteria" id="AAS95813">
    <property type="protein sequence ID" value="AAS95813"/>
    <property type="gene ID" value="DVU_1335"/>
</dbReference>
<dbReference type="KEGG" id="dvu:DVU_1335"/>
<dbReference type="PATRIC" id="fig|882.5.peg.1246"/>
<dbReference type="eggNOG" id="COG0740">
    <property type="taxonomic scope" value="Bacteria"/>
</dbReference>
<dbReference type="HOGENOM" id="CLU_058707_3_2_7"/>
<dbReference type="OrthoDB" id="9802800at2"/>
<dbReference type="PhylomeDB" id="Q72CE8"/>
<dbReference type="Proteomes" id="UP000002194">
    <property type="component" value="Chromosome"/>
</dbReference>
<dbReference type="GO" id="GO:0005737">
    <property type="term" value="C:cytoplasm"/>
    <property type="evidence" value="ECO:0007669"/>
    <property type="project" value="UniProtKB-SubCell"/>
</dbReference>
<dbReference type="GO" id="GO:0009368">
    <property type="term" value="C:endopeptidase Clp complex"/>
    <property type="evidence" value="ECO:0007669"/>
    <property type="project" value="TreeGrafter"/>
</dbReference>
<dbReference type="GO" id="GO:0004176">
    <property type="term" value="F:ATP-dependent peptidase activity"/>
    <property type="evidence" value="ECO:0007669"/>
    <property type="project" value="InterPro"/>
</dbReference>
<dbReference type="GO" id="GO:0051117">
    <property type="term" value="F:ATPase binding"/>
    <property type="evidence" value="ECO:0007669"/>
    <property type="project" value="TreeGrafter"/>
</dbReference>
<dbReference type="GO" id="GO:0004252">
    <property type="term" value="F:serine-type endopeptidase activity"/>
    <property type="evidence" value="ECO:0007669"/>
    <property type="project" value="UniProtKB-UniRule"/>
</dbReference>
<dbReference type="GO" id="GO:0006515">
    <property type="term" value="P:protein quality control for misfolded or incompletely synthesized proteins"/>
    <property type="evidence" value="ECO:0007669"/>
    <property type="project" value="TreeGrafter"/>
</dbReference>
<dbReference type="CDD" id="cd07017">
    <property type="entry name" value="S14_ClpP_2"/>
    <property type="match status" value="1"/>
</dbReference>
<dbReference type="FunFam" id="3.90.226.10:FF:000001">
    <property type="entry name" value="ATP-dependent Clp protease proteolytic subunit"/>
    <property type="match status" value="1"/>
</dbReference>
<dbReference type="Gene3D" id="3.90.226.10">
    <property type="entry name" value="2-enoyl-CoA Hydratase, Chain A, domain 1"/>
    <property type="match status" value="1"/>
</dbReference>
<dbReference type="HAMAP" id="MF_00444">
    <property type="entry name" value="ClpP"/>
    <property type="match status" value="1"/>
</dbReference>
<dbReference type="InterPro" id="IPR001907">
    <property type="entry name" value="ClpP"/>
</dbReference>
<dbReference type="InterPro" id="IPR029045">
    <property type="entry name" value="ClpP/crotonase-like_dom_sf"/>
</dbReference>
<dbReference type="InterPro" id="IPR023562">
    <property type="entry name" value="ClpP/TepA"/>
</dbReference>
<dbReference type="InterPro" id="IPR033135">
    <property type="entry name" value="ClpP_His_AS"/>
</dbReference>
<dbReference type="InterPro" id="IPR018215">
    <property type="entry name" value="ClpP_Ser_AS"/>
</dbReference>
<dbReference type="NCBIfam" id="TIGR00493">
    <property type="entry name" value="clpP"/>
    <property type="match status" value="1"/>
</dbReference>
<dbReference type="NCBIfam" id="NF001368">
    <property type="entry name" value="PRK00277.1"/>
    <property type="match status" value="1"/>
</dbReference>
<dbReference type="NCBIfam" id="NF009205">
    <property type="entry name" value="PRK12553.1"/>
    <property type="match status" value="1"/>
</dbReference>
<dbReference type="PANTHER" id="PTHR10381">
    <property type="entry name" value="ATP-DEPENDENT CLP PROTEASE PROTEOLYTIC SUBUNIT"/>
    <property type="match status" value="1"/>
</dbReference>
<dbReference type="PANTHER" id="PTHR10381:SF11">
    <property type="entry name" value="ATP-DEPENDENT CLP PROTEASE PROTEOLYTIC SUBUNIT, MITOCHONDRIAL"/>
    <property type="match status" value="1"/>
</dbReference>
<dbReference type="Pfam" id="PF00574">
    <property type="entry name" value="CLP_protease"/>
    <property type="match status" value="1"/>
</dbReference>
<dbReference type="PRINTS" id="PR00127">
    <property type="entry name" value="CLPPROTEASEP"/>
</dbReference>
<dbReference type="SUPFAM" id="SSF52096">
    <property type="entry name" value="ClpP/crotonase"/>
    <property type="match status" value="1"/>
</dbReference>
<dbReference type="PROSITE" id="PS00382">
    <property type="entry name" value="CLP_PROTEASE_HIS"/>
    <property type="match status" value="1"/>
</dbReference>
<dbReference type="PROSITE" id="PS00381">
    <property type="entry name" value="CLP_PROTEASE_SER"/>
    <property type="match status" value="1"/>
</dbReference>